<accession>P39889</accession>
<sequence>MATISPSPDLFTLVNVFGVAPEKQRELRDHLVQVTEDLIRHMPGFVSATFHLSRDGEQVVNYAQWRSEADFRAMHADPRLQPHFDYCRSVSRPKPIFCEVTHSFGATSPEGA</sequence>
<keyword id="KW-0045">Antibiotic biosynthesis</keyword>
<keyword id="KW-0903">Direct protein sequencing</keyword>
<keyword id="KW-0560">Oxidoreductase</keyword>
<feature type="initiator methionine" description="Removed" evidence="1">
    <location>
        <position position="1"/>
    </location>
</feature>
<feature type="chain" id="PRO_0000072453" description="Tetracenomycin-F1 monooxygenase">
    <location>
        <begin position="2"/>
        <end position="112"/>
    </location>
</feature>
<feature type="domain" description="ABM">
    <location>
        <begin position="11"/>
        <end position="100"/>
    </location>
</feature>
<organism>
    <name type="scientific">Streptomyces glaucescens</name>
    <dbReference type="NCBI Taxonomy" id="1907"/>
    <lineage>
        <taxon>Bacteria</taxon>
        <taxon>Bacillati</taxon>
        <taxon>Actinomycetota</taxon>
        <taxon>Actinomycetes</taxon>
        <taxon>Kitasatosporales</taxon>
        <taxon>Streptomycetaceae</taxon>
        <taxon>Streptomyces</taxon>
    </lineage>
</organism>
<name>TCMH_STRGA</name>
<comment type="function">
    <text evidence="1">Oxygenase required for conversion of tetracenomycin F1 to tetracenomycin D3.</text>
</comment>
<comment type="catalytic activity">
    <reaction evidence="1">
        <text>tetracenomycin F1 + O2 = tetracenomycin D3 + H2O + H(+)</text>
        <dbReference type="Rhea" id="RHEA:37447"/>
        <dbReference type="ChEBI" id="CHEBI:15377"/>
        <dbReference type="ChEBI" id="CHEBI:15378"/>
        <dbReference type="ChEBI" id="CHEBI:15379"/>
        <dbReference type="ChEBI" id="CHEBI:74931"/>
        <dbReference type="ChEBI" id="CHEBI:77990"/>
        <dbReference type="EC" id="1.13.12.21"/>
    </reaction>
</comment>
<comment type="activity regulation">
    <text evidence="1">Inhibited by p-chloromercuribenzoic acid, N-ethylmaleimide and diethyl pyrocarbonate.</text>
</comment>
<comment type="biophysicochemical properties">
    <kinetics>
        <KM evidence="1">7.47 uM for tetracenomycin F1</KM>
        <Vmax evidence="1">473.0 nmol/min/mg enzyme</Vmax>
    </kinetics>
    <phDependence>
        <text evidence="1">Optimum pH is 7.5.</text>
    </phDependence>
</comment>
<comment type="pathway">
    <text>Antibiotic biosynthesis; tetracenomycin C biosynthesis.</text>
</comment>
<comment type="subunit">
    <text evidence="1">Homotrimer.</text>
</comment>
<reference key="1">
    <citation type="journal article" date="1993" name="J. Bacteriol.">
        <title>The tcmVI region of the tetracenomycin C biosynthetic gene cluster of Streptomyces glaucescens encodes the tetracenomycin F1 monooxygenase, tetracenomycin F2 cyclase, and, most likely, a second cyclase.</title>
        <authorList>
            <person name="Summers R.G."/>
            <person name="Wendt-Pienkowski E."/>
            <person name="Motamedi H."/>
            <person name="Hutchinson C.R."/>
        </authorList>
    </citation>
    <scope>NUCLEOTIDE SEQUENCE [GENOMIC DNA]</scope>
    <source>
        <strain>DSM 40716 / ETH 22794 / Tue 49</strain>
    </source>
</reference>
<reference key="2">
    <citation type="journal article" date="1993" name="Biochemistry">
        <title>Tetracenomycin F1 monooxygenase: oxidation of a naphthacenone to a naphthacenequinone in the biosynthesis of tetracenomycin C in Streptomyces glaucescens.</title>
        <authorList>
            <person name="Shen B."/>
            <person name="Hutchinson C.R."/>
        </authorList>
    </citation>
    <scope>PROTEIN SEQUENCE OF 2-19</scope>
    <scope>FUNCTION</scope>
    <scope>CATALYTIC ACTIVITY</scope>
    <scope>SUBUNIT</scope>
    <scope>ACTIVITY REGULATION</scope>
    <scope>BIOPHYSICOCHEMICAL PROPERTIES</scope>
</reference>
<gene>
    <name type="primary">tcmH</name>
</gene>
<proteinExistence type="evidence at protein level"/>
<dbReference type="EC" id="1.13.12.21"/>
<dbReference type="EMBL" id="M80674">
    <property type="protein sequence ID" value="AAA67512.1"/>
    <property type="molecule type" value="Genomic_DNA"/>
</dbReference>
<dbReference type="PIR" id="A53291">
    <property type="entry name" value="A53291"/>
</dbReference>
<dbReference type="RefSeq" id="WP_052413894.1">
    <property type="nucleotide sequence ID" value="NZ_CP009438.1"/>
</dbReference>
<dbReference type="SMR" id="P39889"/>
<dbReference type="STRING" id="1907.SGLAU_26340"/>
<dbReference type="eggNOG" id="COG2329">
    <property type="taxonomic scope" value="Bacteria"/>
</dbReference>
<dbReference type="OrthoDB" id="1493813at2"/>
<dbReference type="BioCyc" id="MetaCyc:MONOMER-18103"/>
<dbReference type="UniPathway" id="UPA00174"/>
<dbReference type="GO" id="GO:0016491">
    <property type="term" value="F:oxidoreductase activity"/>
    <property type="evidence" value="ECO:0007669"/>
    <property type="project" value="UniProtKB-KW"/>
</dbReference>
<dbReference type="GO" id="GO:0017000">
    <property type="term" value="P:antibiotic biosynthetic process"/>
    <property type="evidence" value="ECO:0007669"/>
    <property type="project" value="UniProtKB-KW"/>
</dbReference>
<dbReference type="Gene3D" id="3.30.70.100">
    <property type="match status" value="1"/>
</dbReference>
<dbReference type="InterPro" id="IPR007138">
    <property type="entry name" value="ABM_dom"/>
</dbReference>
<dbReference type="InterPro" id="IPR011008">
    <property type="entry name" value="Dimeric_a/b-barrel"/>
</dbReference>
<dbReference type="Pfam" id="PF03992">
    <property type="entry name" value="ABM"/>
    <property type="match status" value="1"/>
</dbReference>
<dbReference type="SUPFAM" id="SSF54909">
    <property type="entry name" value="Dimeric alpha+beta barrel"/>
    <property type="match status" value="1"/>
</dbReference>
<dbReference type="PROSITE" id="PS51725">
    <property type="entry name" value="ABM"/>
    <property type="match status" value="1"/>
</dbReference>
<protein>
    <recommendedName>
        <fullName>Tetracenomycin-F1 monooxygenase</fullName>
        <ecNumber>1.13.12.21</ecNumber>
    </recommendedName>
    <alternativeName>
        <fullName>Tetracenomycin polyketide synthesis hydroxylase TcmH</fullName>
    </alternativeName>
</protein>
<evidence type="ECO:0000269" key="1">
    <source>
    </source>
</evidence>